<organism evidence="10">
    <name type="scientific">Cryptosporidium parvum</name>
    <dbReference type="NCBI Taxonomy" id="5807"/>
    <lineage>
        <taxon>Eukaryota</taxon>
        <taxon>Sar</taxon>
        <taxon>Alveolata</taxon>
        <taxon>Apicomplexa</taxon>
        <taxon>Conoidasida</taxon>
        <taxon>Coccidia</taxon>
        <taxon>Eucoccidiorida</taxon>
        <taxon>Eimeriorina</taxon>
        <taxon>Cryptosporidiidae</taxon>
        <taxon>Cryptosporidium</taxon>
    </lineage>
</organism>
<evidence type="ECO:0000250" key="1"/>
<evidence type="ECO:0000250" key="2">
    <source>
        <dbReference type="UniProtKB" id="Q94IN5"/>
    </source>
</evidence>
<evidence type="ECO:0000255" key="3"/>
<evidence type="ECO:0000255" key="4">
    <source>
        <dbReference type="PROSITE-ProRule" id="PRU00088"/>
    </source>
</evidence>
<evidence type="ECO:0000255" key="5">
    <source>
        <dbReference type="PROSITE-ProRule" id="PRU00711"/>
    </source>
</evidence>
<evidence type="ECO:0000255" key="6">
    <source>
        <dbReference type="PROSITE-ProRule" id="PRU00716"/>
    </source>
</evidence>
<evidence type="ECO:0000269" key="7">
    <source>
    </source>
</evidence>
<evidence type="ECO:0000303" key="8">
    <source>
    </source>
</evidence>
<evidence type="ECO:0000305" key="9"/>
<evidence type="ECO:0000312" key="10">
    <source>
        <dbReference type="EMBL" id="AAK48421.1"/>
    </source>
</evidence>
<protein>
    <recommendedName>
        <fullName>Pyruvate dehydrogenase [NADP(+)]</fullName>
        <ecNumber>1.2.1.51</ecNumber>
    </recommendedName>
    <alternativeName>
        <fullName>CpPNO</fullName>
    </alternativeName>
    <alternativeName>
        <fullName>Pyruvate:NADP(+) oxidoreductase</fullName>
    </alternativeName>
</protein>
<reference evidence="9" key="1">
    <citation type="journal article" date="2001" name="Mol. Biol. Evol.">
        <title>Pyruvate: NADP oxidoreductase from the mitochondrion of Euglena gracilis and from the apicomplexan Cryptosporidium parvum: a biochemical relic linking pyruvate metabolism in mitochondriate and amitochondriate protists.</title>
        <authorList>
            <person name="Rotte C."/>
            <person name="Stejskal F."/>
            <person name="Zhu G."/>
            <person name="Keithly J.S."/>
            <person name="Martin W."/>
        </authorList>
    </citation>
    <scope>NUCLEOTIDE SEQUENCE [GENOMIC DNA]</scope>
    <source>
        <strain>KSU-1</strain>
    </source>
</reference>
<keyword id="KW-0004">4Fe-4S</keyword>
<keyword id="KW-0249">Electron transport</keyword>
<keyword id="KW-0274">FAD</keyword>
<keyword id="KW-0285">Flavoprotein</keyword>
<keyword id="KW-0288">FMN</keyword>
<keyword id="KW-0408">Iron</keyword>
<keyword id="KW-0411">Iron-sulfur</keyword>
<keyword id="KW-0479">Metal-binding</keyword>
<keyword id="KW-0521">NADP</keyword>
<keyword id="KW-0560">Oxidoreductase</keyword>
<keyword id="KW-0677">Repeat</keyword>
<keyword id="KW-0786">Thiamine pyrophosphate</keyword>
<keyword id="KW-0813">Transport</keyword>
<sequence length="1934" mass="217557">MGEKEIVDGCVAACHIAYACSEVAFTYPITPSSTISEVADSWMSRGRRNIFDQVVSVVEMQSEMGSAGALHGSLSVGCSTTTFTASQGLLLMIPNMYKIAGELWPCVFHVTARAIATSSLSIFGDHNDIMAARQTGWAFLGAMTVQEVMDLALVSHVSTFECSVPFVNFFDGFRTSHELQKIDMISYETIKKIFPYEKLKEFRERALNPTHPTLRGTATSSDVYFQLAEARNKYYESTPDIVQSVMDRLAKLIGRSYHLFDYYGHPDAEFLIVVMGSGGLTIEEMIDYLMEKSNEKVGMIKVRLFRPWSIDAFVKKIPKTTKRITVLERCKESGSLGEPLCLDVSTSIMRSELSSNNILVLGGRYGLASKEFTPGMALAVWENMISENPINNFSVGIDDDVTFKSLFVRQPRLDLLTSETKQCLFWGLGSDGTVSANKNAIKIIGESTDLQVQGYFAYDAKKAGGATMSHLRFGPKPIKSAYLLQRCDYVAVHHPSYVHKFDVLENIKQGGCFVLNCPWSTLEELNHELPSKIKHQIASRDVKFYVIDAQRIAQESNLGRRINNILMVVFFSLTNIIPLDLAIKLVKEAIKKTYGKKGDAVVNSNWKAVDLTLESLIQISYDKSQWISKDKCGEKSLPATAVETGNKDQEITKSTVLKQKPEHDVNQFVKDILGPVNALKGDELPVSMFEPTGTVPLGTTAYEKRGIAMSIPIVDMNKCTQCNYCSIVCPHAAIRPFLLDEAEFKNAPETMHIPKAKGGQEFSSYYYRIQVTPLDCTGCELCVHACPDDALHMEGLQKMEAVEKTHWDYLIGLPNKAEKFDRTTVKGSQFQQPLLEFSAACEGCGETPYVKLLTQLFGERMVIANATGCSSIWGASYPSVPYTKNQKGYGPAWGNSLFEDNAEYGLGMVVGYRQRRDRFRELVSNEILKDITEEEEFLKDDNASVQGRNEIITKYDHLKDYLRSWLKNIRNGEACQSLFEEISKLLEDNLINSNNFAQVLKKDRIELLEKLYDSRDLIPKISHWIVGGDGWAYDIGYAGLDHVLSFGEDVNIIILDTEVYSNTGGQASKSTPFGAIAKFAQSGNLRQKKDIGSIAMEYGSVYVASVALGANYSQTIKSLLEAEKYPGTSLIVAYSTCIEHGYTKYNLQQESVKLAVESGYWPLYRYNPELVRTEVVDNLTTIVSSGFTLDSKKVKVDIENFLKRENRFLQLIRSNPELASMAKDKLKAHSDKRFQKMKDMSENVTVTALKDQIKKLKDQLISIQNASKTGELAASGLINADLFIEQEMHVLYGTETGNSEEVAQYIQSQLVSRGYSSSSLNLDDLDIDEFLNPDKFSTVIIVTSTSGQGEFPGSSGILYEALLKKHLENQDDKFCSFMRFGIFGLGDSNYVFFNEAAKKWDKLLLDCGAVRIGAVGMGDDQSEEKYETELIEWLPDYLQLINAPEPKHDEKSEIPKATTFKVTILDSCRNDILNESTGTLCEKLDENNNIGNSHYKPIIPPNSVLLPVIENKRITNQDYDKDVRHIVFKLIGDGGDTPSLSYCLGDSLALYGQNPVNEAIKAIEMFGYNPYSLLRLSINEENEANNTNKVNQRYSSLFGYDITVLQLFVECLDLWGKPNRKFFQEFYRYCSNPEEKIQAKKWAQNEGKKLIEEFSSKTGTYLDVFKMFESARPTLAQLLDIVPFIKSRSYSIASCNKFVNGEKIELCVGIVDWKLESGEIRYGQCTGFLNRLPILDSESKIDSIPRLPSNIKASAFNLPFDYRSPVIMACMGTGIAPFRAFVQNKKYIRDVLKEEIGPVILYFGCRYYDNDYLYREELENYVKEGVITSLNIAFSRDPKGYKTSNCENIRYAQKMYVQHLMLENSQEIYENMIEKCGYFYLCGTKQVPIDIRKAIIQIIIKHSSTTEQVTSEEDANSILNSIQIMGRYNVEAWS</sequence>
<comment type="function">
    <text evidence="8">May have an important role in respiratory metabolism. Cryptosporidium have a relic mitochondrion with no function in energy metabolism so it is not known if PFOR has a function.</text>
</comment>
<comment type="catalytic activity">
    <reaction evidence="8">
        <text>pyruvate + NADP(+) + CoA = acetyl-CoA + CO2 + NADPH</text>
        <dbReference type="Rhea" id="RHEA:17425"/>
        <dbReference type="ChEBI" id="CHEBI:15361"/>
        <dbReference type="ChEBI" id="CHEBI:16526"/>
        <dbReference type="ChEBI" id="CHEBI:57287"/>
        <dbReference type="ChEBI" id="CHEBI:57288"/>
        <dbReference type="ChEBI" id="CHEBI:57783"/>
        <dbReference type="ChEBI" id="CHEBI:58349"/>
        <dbReference type="EC" id="1.2.1.51"/>
    </reaction>
</comment>
<comment type="cofactor">
    <cofactor>
        <name>FAD</name>
        <dbReference type="ChEBI" id="CHEBI:57692"/>
    </cofactor>
    <text>Binds 1 FAD per subunit.</text>
</comment>
<comment type="cofactor">
    <cofactor>
        <name>FMN</name>
        <dbReference type="ChEBI" id="CHEBI:58210"/>
    </cofactor>
    <text>Binds 1 FMN per subunit.</text>
</comment>
<comment type="cofactor">
    <cofactor>
        <name>thiamine diphosphate</name>
        <dbReference type="ChEBI" id="CHEBI:58937"/>
    </cofactor>
</comment>
<comment type="subunit">
    <text evidence="2">Homodimer.</text>
</comment>
<comment type="developmental stage">
    <text evidence="7">Both sporozoites and intracellular stages of life cycle.</text>
</comment>
<comment type="miscellaneous">
    <text evidence="8">Arose from gene fusion of pyruvate:ferredoxin oxidoreductase and cytochrome-P450 reductase. Gene fusion has only been found in Euglena and Cryptosporidium.</text>
</comment>
<comment type="similarity">
    <text evidence="9">In the N-terminal section; belongs to the pyruvate:ferredoxin/flavodoxin oxidoreductase family.</text>
</comment>
<name>PNO_CRYPV</name>
<proteinExistence type="evidence at transcript level"/>
<accession>Q968X7</accession>
<dbReference type="EC" id="1.2.1.51"/>
<dbReference type="EMBL" id="AF208233">
    <property type="protein sequence ID" value="AAK48421.1"/>
    <property type="molecule type" value="Genomic_DNA"/>
</dbReference>
<dbReference type="SMR" id="Q968X7"/>
<dbReference type="ChEMBL" id="CHEMBL2364026"/>
<dbReference type="DrugCentral" id="Q968X7"/>
<dbReference type="VEuPathDB" id="CryptoDB:cgd4_690"/>
<dbReference type="VEuPathDB" id="CryptoDB:CPATCC_0017810"/>
<dbReference type="GO" id="GO:0005739">
    <property type="term" value="C:mitochondrion"/>
    <property type="evidence" value="ECO:0000250"/>
    <property type="project" value="UniProtKB"/>
</dbReference>
<dbReference type="GO" id="GO:0051539">
    <property type="term" value="F:4 iron, 4 sulfur cluster binding"/>
    <property type="evidence" value="ECO:0007669"/>
    <property type="project" value="UniProtKB-KW"/>
</dbReference>
<dbReference type="GO" id="GO:0010181">
    <property type="term" value="F:FMN binding"/>
    <property type="evidence" value="ECO:0007669"/>
    <property type="project" value="InterPro"/>
</dbReference>
<dbReference type="GO" id="GO:0005506">
    <property type="term" value="F:iron ion binding"/>
    <property type="evidence" value="ECO:0007669"/>
    <property type="project" value="InterPro"/>
</dbReference>
<dbReference type="GO" id="GO:0016491">
    <property type="term" value="F:oxidoreductase activity"/>
    <property type="evidence" value="ECO:0000250"/>
    <property type="project" value="UniProtKB"/>
</dbReference>
<dbReference type="GO" id="GO:0050243">
    <property type="term" value="F:pyruvate dehydrogenase (NADP+) activity"/>
    <property type="evidence" value="ECO:0007669"/>
    <property type="project" value="UniProtKB-EC"/>
</dbReference>
<dbReference type="GO" id="GO:0030976">
    <property type="term" value="F:thiamine pyrophosphate binding"/>
    <property type="evidence" value="ECO:0007669"/>
    <property type="project" value="InterPro"/>
</dbReference>
<dbReference type="GO" id="GO:0045333">
    <property type="term" value="P:cellular respiration"/>
    <property type="evidence" value="ECO:0000250"/>
    <property type="project" value="UniProtKB"/>
</dbReference>
<dbReference type="GO" id="GO:0022900">
    <property type="term" value="P:electron transport chain"/>
    <property type="evidence" value="ECO:0007669"/>
    <property type="project" value="InterPro"/>
</dbReference>
<dbReference type="GO" id="GO:0006090">
    <property type="term" value="P:pyruvate metabolic process"/>
    <property type="evidence" value="ECO:0000250"/>
    <property type="project" value="UniProtKB"/>
</dbReference>
<dbReference type="GO" id="GO:0006979">
    <property type="term" value="P:response to oxidative stress"/>
    <property type="evidence" value="ECO:0007669"/>
    <property type="project" value="TreeGrafter"/>
</dbReference>
<dbReference type="CDD" id="cd06207">
    <property type="entry name" value="CyPoR_like"/>
    <property type="match status" value="1"/>
</dbReference>
<dbReference type="CDD" id="cd03377">
    <property type="entry name" value="TPP_PFOR_PNO"/>
    <property type="match status" value="1"/>
</dbReference>
<dbReference type="CDD" id="cd07034">
    <property type="entry name" value="TPP_PYR_PFOR_IOR-alpha_like"/>
    <property type="match status" value="1"/>
</dbReference>
<dbReference type="FunFam" id="3.40.50.360:FF:000088">
    <property type="entry name" value="Pyruvate dehydrogenase [NADP(+)]"/>
    <property type="match status" value="1"/>
</dbReference>
<dbReference type="FunFam" id="3.30.70.20:FF:000022">
    <property type="entry name" value="Pyruvate:ferredoxin (Flavodoxin) oxidoreductase"/>
    <property type="match status" value="1"/>
</dbReference>
<dbReference type="FunFam" id="3.40.50.920:FF:000007">
    <property type="entry name" value="Pyruvate:ferredoxin (Flavodoxin) oxidoreductase"/>
    <property type="match status" value="1"/>
</dbReference>
<dbReference type="FunFam" id="3.40.50.970:FF:000012">
    <property type="entry name" value="Pyruvate:ferredoxin (Flavodoxin) oxidoreductase"/>
    <property type="match status" value="1"/>
</dbReference>
<dbReference type="FunFam" id="3.40.50.970:FF:000041">
    <property type="entry name" value="Pyruvate:ferredoxin (Flavodoxin) oxidoreductase"/>
    <property type="match status" value="1"/>
</dbReference>
<dbReference type="FunFam" id="3.40.920.10:FF:000001">
    <property type="entry name" value="Pyruvate:ferredoxin (Flavodoxin) oxidoreductase"/>
    <property type="match status" value="1"/>
</dbReference>
<dbReference type="Gene3D" id="3.30.70.20">
    <property type="match status" value="1"/>
</dbReference>
<dbReference type="Gene3D" id="3.40.50.360">
    <property type="match status" value="1"/>
</dbReference>
<dbReference type="Gene3D" id="3.40.50.920">
    <property type="match status" value="1"/>
</dbReference>
<dbReference type="Gene3D" id="3.40.50.970">
    <property type="match status" value="2"/>
</dbReference>
<dbReference type="Gene3D" id="1.20.990.10">
    <property type="entry name" value="NADPH-cytochrome p450 Reductase, Chain A, domain 3"/>
    <property type="match status" value="1"/>
</dbReference>
<dbReference type="Gene3D" id="3.40.50.80">
    <property type="entry name" value="Nucleotide-binding domain of ferredoxin-NADP reductase (FNR) module"/>
    <property type="match status" value="1"/>
</dbReference>
<dbReference type="Gene3D" id="3.40.920.10">
    <property type="entry name" value="Pyruvate-ferredoxin oxidoreductase, PFOR, domain III"/>
    <property type="match status" value="1"/>
</dbReference>
<dbReference type="Gene3D" id="4.10.780.10">
    <property type="entry name" value="Pyruvate-flavodoxin oxidoreductase, EKR domain"/>
    <property type="match status" value="1"/>
</dbReference>
<dbReference type="Gene3D" id="2.40.30.10">
    <property type="entry name" value="Translation factors"/>
    <property type="match status" value="1"/>
</dbReference>
<dbReference type="InterPro" id="IPR017896">
    <property type="entry name" value="4Fe4S_Fe-S-bd"/>
</dbReference>
<dbReference type="InterPro" id="IPR017900">
    <property type="entry name" value="4Fe4S_Fe_S_CS"/>
</dbReference>
<dbReference type="InterPro" id="IPR003097">
    <property type="entry name" value="CysJ-like_FAD-binding"/>
</dbReference>
<dbReference type="InterPro" id="IPR017927">
    <property type="entry name" value="FAD-bd_FR_type"/>
</dbReference>
<dbReference type="InterPro" id="IPR001094">
    <property type="entry name" value="Flavdoxin-like"/>
</dbReference>
<dbReference type="InterPro" id="IPR008254">
    <property type="entry name" value="Flavodoxin/NO_synth"/>
</dbReference>
<dbReference type="InterPro" id="IPR001709">
    <property type="entry name" value="Flavoprot_Pyr_Nucl_cyt_Rdtase"/>
</dbReference>
<dbReference type="InterPro" id="IPR029039">
    <property type="entry name" value="Flavoprotein-like_sf"/>
</dbReference>
<dbReference type="InterPro" id="IPR039261">
    <property type="entry name" value="FNR_nucleotide-bd"/>
</dbReference>
<dbReference type="InterPro" id="IPR023173">
    <property type="entry name" value="NADPH_Cyt_P450_Rdtase_alpha"/>
</dbReference>
<dbReference type="InterPro" id="IPR001433">
    <property type="entry name" value="OxRdtase_FAD/NAD-bd"/>
</dbReference>
<dbReference type="InterPro" id="IPR033412">
    <property type="entry name" value="PFOR_II"/>
</dbReference>
<dbReference type="InterPro" id="IPR050722">
    <property type="entry name" value="Pyruvate:ferred/Flavod_OxRd"/>
</dbReference>
<dbReference type="InterPro" id="IPR037112">
    <property type="entry name" value="Pyrv-flavodox_OxR_EKR_sf"/>
</dbReference>
<dbReference type="InterPro" id="IPR019456">
    <property type="entry name" value="Pyrv-flavodox_OxRtase_EKR"/>
</dbReference>
<dbReference type="InterPro" id="IPR019752">
    <property type="entry name" value="Pyrv/ketoisovalerate_OxRed_cat"/>
</dbReference>
<dbReference type="InterPro" id="IPR002880">
    <property type="entry name" value="Pyrv_Fd/Flavodoxin_OxRdtase_N"/>
</dbReference>
<dbReference type="InterPro" id="IPR011895">
    <property type="entry name" value="Pyrv_flavodox_OxRed"/>
</dbReference>
<dbReference type="InterPro" id="IPR002869">
    <property type="entry name" value="Pyrv_flavodox_OxRed_cen"/>
</dbReference>
<dbReference type="InterPro" id="IPR017938">
    <property type="entry name" value="Riboflavin_synthase-like_b-brl"/>
</dbReference>
<dbReference type="InterPro" id="IPR029061">
    <property type="entry name" value="THDP-binding"/>
</dbReference>
<dbReference type="InterPro" id="IPR011766">
    <property type="entry name" value="TPP_enzyme_TPP-bd"/>
</dbReference>
<dbReference type="InterPro" id="IPR009014">
    <property type="entry name" value="Transketo_C/PFOR_II"/>
</dbReference>
<dbReference type="NCBIfam" id="TIGR02176">
    <property type="entry name" value="pyruv_ox_red"/>
    <property type="match status" value="1"/>
</dbReference>
<dbReference type="PANTHER" id="PTHR32154">
    <property type="entry name" value="PYRUVATE-FLAVODOXIN OXIDOREDUCTASE-RELATED"/>
    <property type="match status" value="1"/>
</dbReference>
<dbReference type="PANTHER" id="PTHR32154:SF0">
    <property type="entry name" value="PYRUVATE-FLAVODOXIN OXIDOREDUCTASE-RELATED"/>
    <property type="match status" value="1"/>
</dbReference>
<dbReference type="Pfam" id="PF10371">
    <property type="entry name" value="EKR"/>
    <property type="match status" value="1"/>
</dbReference>
<dbReference type="Pfam" id="PF00667">
    <property type="entry name" value="FAD_binding_1"/>
    <property type="match status" value="1"/>
</dbReference>
<dbReference type="Pfam" id="PF12838">
    <property type="entry name" value="Fer4_7"/>
    <property type="match status" value="1"/>
</dbReference>
<dbReference type="Pfam" id="PF00258">
    <property type="entry name" value="Flavodoxin_1"/>
    <property type="match status" value="1"/>
</dbReference>
<dbReference type="Pfam" id="PF00175">
    <property type="entry name" value="NAD_binding_1"/>
    <property type="match status" value="1"/>
</dbReference>
<dbReference type="Pfam" id="PF17147">
    <property type="entry name" value="PFOR_II"/>
    <property type="match status" value="1"/>
</dbReference>
<dbReference type="Pfam" id="PF01558">
    <property type="entry name" value="POR"/>
    <property type="match status" value="1"/>
</dbReference>
<dbReference type="Pfam" id="PF01855">
    <property type="entry name" value="POR_N"/>
    <property type="match status" value="1"/>
</dbReference>
<dbReference type="Pfam" id="PF02775">
    <property type="entry name" value="TPP_enzyme_C"/>
    <property type="match status" value="1"/>
</dbReference>
<dbReference type="PRINTS" id="PR00369">
    <property type="entry name" value="FLAVODOXIN"/>
</dbReference>
<dbReference type="PRINTS" id="PR00371">
    <property type="entry name" value="FPNCR"/>
</dbReference>
<dbReference type="SMART" id="SM00890">
    <property type="entry name" value="EKR"/>
    <property type="match status" value="1"/>
</dbReference>
<dbReference type="SUPFAM" id="SSF54862">
    <property type="entry name" value="4Fe-4S ferredoxins"/>
    <property type="match status" value="1"/>
</dbReference>
<dbReference type="SUPFAM" id="SSF52343">
    <property type="entry name" value="Ferredoxin reductase-like, C-terminal NADP-linked domain"/>
    <property type="match status" value="1"/>
</dbReference>
<dbReference type="SUPFAM" id="SSF52218">
    <property type="entry name" value="Flavoproteins"/>
    <property type="match status" value="1"/>
</dbReference>
<dbReference type="SUPFAM" id="SSF53323">
    <property type="entry name" value="Pyruvate-ferredoxin oxidoreductase, PFOR, domain III"/>
    <property type="match status" value="1"/>
</dbReference>
<dbReference type="SUPFAM" id="SSF63380">
    <property type="entry name" value="Riboflavin synthase domain-like"/>
    <property type="match status" value="1"/>
</dbReference>
<dbReference type="SUPFAM" id="SSF52518">
    <property type="entry name" value="Thiamin diphosphate-binding fold (THDP-binding)"/>
    <property type="match status" value="3"/>
</dbReference>
<dbReference type="SUPFAM" id="SSF52922">
    <property type="entry name" value="TK C-terminal domain-like"/>
    <property type="match status" value="1"/>
</dbReference>
<dbReference type="PROSITE" id="PS00198">
    <property type="entry name" value="4FE4S_FER_1"/>
    <property type="match status" value="2"/>
</dbReference>
<dbReference type="PROSITE" id="PS51379">
    <property type="entry name" value="4FE4S_FER_2"/>
    <property type="match status" value="2"/>
</dbReference>
<dbReference type="PROSITE" id="PS51384">
    <property type="entry name" value="FAD_FR"/>
    <property type="match status" value="1"/>
</dbReference>
<dbReference type="PROSITE" id="PS50902">
    <property type="entry name" value="FLAVODOXIN_LIKE"/>
    <property type="match status" value="1"/>
</dbReference>
<feature type="chain" id="PRO_0000215559" description="Pyruvate dehydrogenase [NADP(+)]">
    <location>
        <begin position="1"/>
        <end position="1934"/>
    </location>
</feature>
<feature type="domain" description="4Fe-4S ferredoxin-type 1" evidence="5">
    <location>
        <begin position="710"/>
        <end position="739"/>
    </location>
</feature>
<feature type="domain" description="4Fe-4S ferredoxin-type 2" evidence="5">
    <location>
        <begin position="767"/>
        <end position="796"/>
    </location>
</feature>
<feature type="domain" description="Flavodoxin-like" evidence="4">
    <location>
        <begin position="1288"/>
        <end position="1438"/>
    </location>
</feature>
<feature type="domain" description="FAD-binding FR-type" evidence="6">
    <location>
        <begin position="1501"/>
        <end position="1759"/>
    </location>
</feature>
<feature type="binding site" evidence="3">
    <location>
        <position position="719"/>
    </location>
    <ligand>
        <name>[4Fe-4S] cluster</name>
        <dbReference type="ChEBI" id="CHEBI:49883"/>
        <label>1</label>
    </ligand>
</feature>
<feature type="binding site" evidence="3">
    <location>
        <position position="722"/>
    </location>
    <ligand>
        <name>[4Fe-4S] cluster</name>
        <dbReference type="ChEBI" id="CHEBI:49883"/>
        <label>1</label>
    </ligand>
</feature>
<feature type="binding site" evidence="3">
    <location>
        <position position="725"/>
    </location>
    <ligand>
        <name>[4Fe-4S] cluster</name>
        <dbReference type="ChEBI" id="CHEBI:49883"/>
        <label>1</label>
    </ligand>
</feature>
<feature type="binding site" evidence="3">
    <location>
        <position position="729"/>
    </location>
    <ligand>
        <name>[4Fe-4S] cluster</name>
        <dbReference type="ChEBI" id="CHEBI:49883"/>
        <label>1</label>
    </ligand>
</feature>
<feature type="binding site" evidence="3">
    <location>
        <position position="776"/>
    </location>
    <ligand>
        <name>[4Fe-4S] cluster</name>
        <dbReference type="ChEBI" id="CHEBI:49883"/>
        <label>2</label>
    </ligand>
</feature>
<feature type="binding site" evidence="3">
    <location>
        <position position="779"/>
    </location>
    <ligand>
        <name>[4Fe-4S] cluster</name>
        <dbReference type="ChEBI" id="CHEBI:49883"/>
        <label>2</label>
    </ligand>
</feature>
<feature type="binding site" evidence="3">
    <location>
        <position position="782"/>
    </location>
    <ligand>
        <name>[4Fe-4S] cluster</name>
        <dbReference type="ChEBI" id="CHEBI:49883"/>
        <label>2</label>
    </ligand>
</feature>
<feature type="binding site" evidence="3">
    <location>
        <position position="786"/>
    </location>
    <ligand>
        <name>[4Fe-4S] cluster</name>
        <dbReference type="ChEBI" id="CHEBI:49883"/>
        <label>2</label>
    </ligand>
</feature>
<feature type="binding site" evidence="1">
    <location>
        <begin position="1542"/>
        <end position="1553"/>
    </location>
    <ligand>
        <name>FAD</name>
        <dbReference type="ChEBI" id="CHEBI:57692"/>
    </ligand>
</feature>
<feature type="binding site" evidence="1">
    <location>
        <begin position="1685"/>
        <end position="1695"/>
    </location>
    <ligand>
        <name>FAD</name>
        <dbReference type="ChEBI" id="CHEBI:57692"/>
    </ligand>
</feature>
<gene>
    <name type="primary">PFOR</name>
</gene>